<dbReference type="EC" id="2.5.1.78" evidence="1"/>
<dbReference type="EMBL" id="CP000348">
    <property type="protein sequence ID" value="ABJ78210.1"/>
    <property type="molecule type" value="Genomic_DNA"/>
</dbReference>
<dbReference type="SMR" id="Q054N5"/>
<dbReference type="KEGG" id="lbl:LBL_0633"/>
<dbReference type="HOGENOM" id="CLU_089358_1_1_12"/>
<dbReference type="UniPathway" id="UPA00275">
    <property type="reaction ID" value="UER00404"/>
</dbReference>
<dbReference type="GO" id="GO:0005829">
    <property type="term" value="C:cytosol"/>
    <property type="evidence" value="ECO:0007669"/>
    <property type="project" value="TreeGrafter"/>
</dbReference>
<dbReference type="GO" id="GO:0009349">
    <property type="term" value="C:riboflavin synthase complex"/>
    <property type="evidence" value="ECO:0007669"/>
    <property type="project" value="InterPro"/>
</dbReference>
<dbReference type="GO" id="GO:0000906">
    <property type="term" value="F:6,7-dimethyl-8-ribityllumazine synthase activity"/>
    <property type="evidence" value="ECO:0007669"/>
    <property type="project" value="UniProtKB-UniRule"/>
</dbReference>
<dbReference type="GO" id="GO:0009231">
    <property type="term" value="P:riboflavin biosynthetic process"/>
    <property type="evidence" value="ECO:0007669"/>
    <property type="project" value="UniProtKB-UniRule"/>
</dbReference>
<dbReference type="CDD" id="cd09209">
    <property type="entry name" value="Lumazine_synthase-I"/>
    <property type="match status" value="1"/>
</dbReference>
<dbReference type="FunFam" id="3.40.50.960:FF:000001">
    <property type="entry name" value="6,7-dimethyl-8-ribityllumazine synthase"/>
    <property type="match status" value="1"/>
</dbReference>
<dbReference type="Gene3D" id="3.40.50.960">
    <property type="entry name" value="Lumazine/riboflavin synthase"/>
    <property type="match status" value="1"/>
</dbReference>
<dbReference type="HAMAP" id="MF_00178">
    <property type="entry name" value="Lumazine_synth"/>
    <property type="match status" value="1"/>
</dbReference>
<dbReference type="InterPro" id="IPR034964">
    <property type="entry name" value="LS"/>
</dbReference>
<dbReference type="InterPro" id="IPR002180">
    <property type="entry name" value="LS/RS"/>
</dbReference>
<dbReference type="InterPro" id="IPR036467">
    <property type="entry name" value="LS/RS_sf"/>
</dbReference>
<dbReference type="NCBIfam" id="TIGR00114">
    <property type="entry name" value="lumazine-synth"/>
    <property type="match status" value="1"/>
</dbReference>
<dbReference type="NCBIfam" id="NF000812">
    <property type="entry name" value="PRK00061.1-4"/>
    <property type="match status" value="1"/>
</dbReference>
<dbReference type="PANTHER" id="PTHR21058:SF0">
    <property type="entry name" value="6,7-DIMETHYL-8-RIBITYLLUMAZINE SYNTHASE"/>
    <property type="match status" value="1"/>
</dbReference>
<dbReference type="PANTHER" id="PTHR21058">
    <property type="entry name" value="6,7-DIMETHYL-8-RIBITYLLUMAZINE SYNTHASE DMRL SYNTHASE LUMAZINE SYNTHASE"/>
    <property type="match status" value="1"/>
</dbReference>
<dbReference type="Pfam" id="PF00885">
    <property type="entry name" value="DMRL_synthase"/>
    <property type="match status" value="1"/>
</dbReference>
<dbReference type="SUPFAM" id="SSF52121">
    <property type="entry name" value="Lumazine synthase"/>
    <property type="match status" value="1"/>
</dbReference>
<comment type="function">
    <text evidence="1">Catalyzes the formation of 6,7-dimethyl-8-ribityllumazine by condensation of 5-amino-6-(D-ribitylamino)uracil with 3,4-dihydroxy-2-butanone 4-phosphate. This is the penultimate step in the biosynthesis of riboflavin.</text>
</comment>
<comment type="catalytic activity">
    <reaction evidence="1">
        <text>(2S)-2-hydroxy-3-oxobutyl phosphate + 5-amino-6-(D-ribitylamino)uracil = 6,7-dimethyl-8-(1-D-ribityl)lumazine + phosphate + 2 H2O + H(+)</text>
        <dbReference type="Rhea" id="RHEA:26152"/>
        <dbReference type="ChEBI" id="CHEBI:15377"/>
        <dbReference type="ChEBI" id="CHEBI:15378"/>
        <dbReference type="ChEBI" id="CHEBI:15934"/>
        <dbReference type="ChEBI" id="CHEBI:43474"/>
        <dbReference type="ChEBI" id="CHEBI:58201"/>
        <dbReference type="ChEBI" id="CHEBI:58830"/>
        <dbReference type="EC" id="2.5.1.78"/>
    </reaction>
</comment>
<comment type="pathway">
    <text evidence="1">Cofactor biosynthesis; riboflavin biosynthesis; riboflavin from 2-hydroxy-3-oxobutyl phosphate and 5-amino-6-(D-ribitylamino)uracil: step 1/2.</text>
</comment>
<comment type="similarity">
    <text evidence="1">Belongs to the DMRL synthase family.</text>
</comment>
<accession>Q054N5</accession>
<protein>
    <recommendedName>
        <fullName evidence="1">6,7-dimethyl-8-ribityllumazine synthase</fullName>
        <shortName evidence="1">DMRL synthase</shortName>
        <shortName evidence="1">LS</shortName>
        <shortName evidence="1">Lumazine synthase</shortName>
        <ecNumber evidence="1">2.5.1.78</ecNumber>
    </recommendedName>
</protein>
<reference key="1">
    <citation type="journal article" date="2006" name="Proc. Natl. Acad. Sci. U.S.A.">
        <title>Genome reduction in Leptospira borgpetersenii reflects limited transmission potential.</title>
        <authorList>
            <person name="Bulach D.M."/>
            <person name="Zuerner R.L."/>
            <person name="Wilson P."/>
            <person name="Seemann T."/>
            <person name="McGrath A."/>
            <person name="Cullen P.A."/>
            <person name="Davis J."/>
            <person name="Johnson M."/>
            <person name="Kuczek E."/>
            <person name="Alt D.P."/>
            <person name="Peterson-Burch B."/>
            <person name="Coppel R.L."/>
            <person name="Rood J.I."/>
            <person name="Davies J.K."/>
            <person name="Adler B."/>
        </authorList>
    </citation>
    <scope>NUCLEOTIDE SEQUENCE [LARGE SCALE GENOMIC DNA]</scope>
    <source>
        <strain>L550</strain>
    </source>
</reference>
<gene>
    <name evidence="1" type="primary">ribH</name>
    <name type="ordered locus">LBL_0633</name>
</gene>
<sequence>MIQELKADLNGKGQKHCVIVSRFNEFITENLLKGALESFRMHGVREEDVTVVRVPGAYEMPVVVAKVAASKKYNSIVCLGAVIRGATAHFDFVAGESAKIGSIGVQHSIPVVFGVLTTDTIEQAIERAGTKAGNKGAEAAATAVEMVNLLSLL</sequence>
<keyword id="KW-0686">Riboflavin biosynthesis</keyword>
<keyword id="KW-0808">Transferase</keyword>
<proteinExistence type="inferred from homology"/>
<name>RISB_LEPBL</name>
<organism>
    <name type="scientific">Leptospira borgpetersenii serovar Hardjo-bovis (strain L550)</name>
    <dbReference type="NCBI Taxonomy" id="355276"/>
    <lineage>
        <taxon>Bacteria</taxon>
        <taxon>Pseudomonadati</taxon>
        <taxon>Spirochaetota</taxon>
        <taxon>Spirochaetia</taxon>
        <taxon>Leptospirales</taxon>
        <taxon>Leptospiraceae</taxon>
        <taxon>Leptospira</taxon>
    </lineage>
</organism>
<feature type="chain" id="PRO_1000040441" description="6,7-dimethyl-8-ribityllumazine synthase">
    <location>
        <begin position="1"/>
        <end position="153"/>
    </location>
</feature>
<feature type="active site" description="Proton donor" evidence="1">
    <location>
        <position position="89"/>
    </location>
</feature>
<feature type="binding site" evidence="1">
    <location>
        <position position="23"/>
    </location>
    <ligand>
        <name>5-amino-6-(D-ribitylamino)uracil</name>
        <dbReference type="ChEBI" id="CHEBI:15934"/>
    </ligand>
</feature>
<feature type="binding site" evidence="1">
    <location>
        <begin position="57"/>
        <end position="59"/>
    </location>
    <ligand>
        <name>5-amino-6-(D-ribitylamino)uracil</name>
        <dbReference type="ChEBI" id="CHEBI:15934"/>
    </ligand>
</feature>
<feature type="binding site" evidence="1">
    <location>
        <begin position="81"/>
        <end position="83"/>
    </location>
    <ligand>
        <name>5-amino-6-(D-ribitylamino)uracil</name>
        <dbReference type="ChEBI" id="CHEBI:15934"/>
    </ligand>
</feature>
<feature type="binding site" evidence="1">
    <location>
        <begin position="86"/>
        <end position="87"/>
    </location>
    <ligand>
        <name>(2S)-2-hydroxy-3-oxobutyl phosphate</name>
        <dbReference type="ChEBI" id="CHEBI:58830"/>
    </ligand>
</feature>
<feature type="binding site" evidence="1">
    <location>
        <position position="113"/>
    </location>
    <ligand>
        <name>5-amino-6-(D-ribitylamino)uracil</name>
        <dbReference type="ChEBI" id="CHEBI:15934"/>
    </ligand>
</feature>
<feature type="binding site" evidence="1">
    <location>
        <position position="127"/>
    </location>
    <ligand>
        <name>(2S)-2-hydroxy-3-oxobutyl phosphate</name>
        <dbReference type="ChEBI" id="CHEBI:58830"/>
    </ligand>
</feature>
<evidence type="ECO:0000255" key="1">
    <source>
        <dbReference type="HAMAP-Rule" id="MF_00178"/>
    </source>
</evidence>